<sequence>MAYRDQPLGELALSIPRASALFRKYDMDYCCGGKQTLARAAARKELDVEVIEAELAKLAEQPIEKDWRSAPLAEIIDHIIVRYHDRHREQLPELILQATKVERVHADKPSVPKGLTKYLTMLHEELSSHMMKEEQILFPMIKQGMGSQAMGPISVMESEHDEAGELLEVIKHTTNNVTPPPEACTTWKAMYNGINELIDDLMDHISLENNVLFPRALAGE</sequence>
<comment type="function">
    <text evidence="2 3 4">Di-iron-containing protein involved in the repair of iron-sulfur clusters damaged by oxidative and nitrosative stress conditions.</text>
</comment>
<comment type="subunit">
    <text evidence="4">Homodimer.</text>
</comment>
<comment type="subcellular location">
    <subcellularLocation>
        <location evidence="5">Cytoplasm</location>
    </subcellularLocation>
</comment>
<comment type="induction">
    <text evidence="1 2">Induced by nitric oxide. Negatively regulated by Fnr and Fur, but no obvious Fnr or Fur binding sites were found, suggesting that this regulation could be indirect.</text>
</comment>
<comment type="disruption phenotype">
    <text evidence="1 2 3">Mutants show a severe growth impairment under nitrosative and oxidative stress conditions. Mutation increases the sensitivity of the bacterium to iron starvation, increases the intracellular levels of free iron, and decreases the activity of several iron-sulfur-containing proteins.</text>
</comment>
<comment type="similarity">
    <text evidence="5">Belongs to the RIC family. YtfE subfamily.</text>
</comment>
<protein>
    <recommendedName>
        <fullName>Iron-sulfur cluster repair protein YtfE</fullName>
    </recommendedName>
    <alternativeName>
        <fullName>Regulator of cell morphogenesis and NO signaling</fullName>
        <shortName>RCMNS</shortName>
    </alternativeName>
</protein>
<name>YTFE_ECOLI</name>
<accession>P69506</accession>
<accession>P39313</accession>
<accession>Q2M696</accession>
<keyword id="KW-0002">3D-structure</keyword>
<keyword id="KW-0963">Cytoplasm</keyword>
<keyword id="KW-0408">Iron</keyword>
<keyword id="KW-0479">Metal-binding</keyword>
<keyword id="KW-1185">Reference proteome</keyword>
<keyword id="KW-0346">Stress response</keyword>
<gene>
    <name type="primary">ytfE</name>
    <name type="ordered locus">b4209</name>
    <name type="ordered locus">JW4167</name>
</gene>
<evidence type="ECO:0000269" key="1">
    <source>
    </source>
</evidence>
<evidence type="ECO:0000269" key="2">
    <source>
    </source>
</evidence>
<evidence type="ECO:0000269" key="3">
    <source>
    </source>
</evidence>
<evidence type="ECO:0000269" key="4">
    <source>
    </source>
</evidence>
<evidence type="ECO:0000305" key="5"/>
<evidence type="ECO:0007829" key="6">
    <source>
        <dbReference type="PDB" id="5FNP"/>
    </source>
</evidence>
<evidence type="ECO:0007829" key="7">
    <source>
        <dbReference type="PDB" id="7BHA"/>
    </source>
</evidence>
<evidence type="ECO:0007829" key="8">
    <source>
        <dbReference type="PDB" id="7BHB"/>
    </source>
</evidence>
<organism>
    <name type="scientific">Escherichia coli (strain K12)</name>
    <dbReference type="NCBI Taxonomy" id="83333"/>
    <lineage>
        <taxon>Bacteria</taxon>
        <taxon>Pseudomonadati</taxon>
        <taxon>Pseudomonadota</taxon>
        <taxon>Gammaproteobacteria</taxon>
        <taxon>Enterobacterales</taxon>
        <taxon>Enterobacteriaceae</taxon>
        <taxon>Escherichia</taxon>
    </lineage>
</organism>
<dbReference type="EMBL" id="U14003">
    <property type="protein sequence ID" value="AAA97105.1"/>
    <property type="molecule type" value="Genomic_DNA"/>
</dbReference>
<dbReference type="EMBL" id="U00096">
    <property type="protein sequence ID" value="AAC77166.1"/>
    <property type="molecule type" value="Genomic_DNA"/>
</dbReference>
<dbReference type="EMBL" id="AP009048">
    <property type="protein sequence ID" value="BAE78210.1"/>
    <property type="molecule type" value="Genomic_DNA"/>
</dbReference>
<dbReference type="PIR" id="S56434">
    <property type="entry name" value="S56434"/>
</dbReference>
<dbReference type="RefSeq" id="NP_418630.1">
    <property type="nucleotide sequence ID" value="NC_000913.3"/>
</dbReference>
<dbReference type="RefSeq" id="WP_000331456.1">
    <property type="nucleotide sequence ID" value="NZ_STEB01000013.1"/>
</dbReference>
<dbReference type="PDB" id="5FNN">
    <property type="method" value="X-ray"/>
    <property type="resolution" value="2.09 A"/>
    <property type="chains" value="A/B=1-220"/>
</dbReference>
<dbReference type="PDB" id="5FNP">
    <property type="method" value="X-ray"/>
    <property type="resolution" value="1.80 A"/>
    <property type="chains" value="A/B=1-220"/>
</dbReference>
<dbReference type="PDB" id="5FNY">
    <property type="method" value="X-ray"/>
    <property type="resolution" value="2.01 A"/>
    <property type="chains" value="A/B=1-220"/>
</dbReference>
<dbReference type="PDB" id="7BE8">
    <property type="method" value="X-ray"/>
    <property type="resolution" value="2.02 A"/>
    <property type="chains" value="A/B=1-220"/>
</dbReference>
<dbReference type="PDB" id="7BHA">
    <property type="method" value="X-ray"/>
    <property type="resolution" value="2.19 A"/>
    <property type="chains" value="A/B=2-220"/>
</dbReference>
<dbReference type="PDB" id="7BHB">
    <property type="method" value="X-ray"/>
    <property type="resolution" value="2.36 A"/>
    <property type="chains" value="A/B=2-220"/>
</dbReference>
<dbReference type="PDB" id="7BHC">
    <property type="method" value="X-ray"/>
    <property type="resolution" value="1.87 A"/>
    <property type="chains" value="A/B=2-220"/>
</dbReference>
<dbReference type="PDB" id="7OYI">
    <property type="method" value="X-ray"/>
    <property type="resolution" value="1.86 A"/>
    <property type="chains" value="A/B=2-220"/>
</dbReference>
<dbReference type="PDBsum" id="5FNN"/>
<dbReference type="PDBsum" id="5FNP"/>
<dbReference type="PDBsum" id="5FNY"/>
<dbReference type="PDBsum" id="7BE8"/>
<dbReference type="PDBsum" id="7BHA"/>
<dbReference type="PDBsum" id="7BHB"/>
<dbReference type="PDBsum" id="7BHC"/>
<dbReference type="PDBsum" id="7OYI"/>
<dbReference type="SMR" id="P69506"/>
<dbReference type="BioGRID" id="4263431">
    <property type="interactions" value="79"/>
</dbReference>
<dbReference type="DIP" id="DIP-35833N"/>
<dbReference type="FunCoup" id="P69506">
    <property type="interactions" value="16"/>
</dbReference>
<dbReference type="IntAct" id="P69506">
    <property type="interactions" value="1"/>
</dbReference>
<dbReference type="STRING" id="511145.b4209"/>
<dbReference type="jPOST" id="P69506"/>
<dbReference type="PaxDb" id="511145-b4209"/>
<dbReference type="EnsemblBacteria" id="AAC77166">
    <property type="protein sequence ID" value="AAC77166"/>
    <property type="gene ID" value="b4209"/>
</dbReference>
<dbReference type="GeneID" id="93777612"/>
<dbReference type="GeneID" id="948724"/>
<dbReference type="KEGG" id="ecj:JW4167"/>
<dbReference type="KEGG" id="eco:b4209"/>
<dbReference type="KEGG" id="ecoc:C3026_22735"/>
<dbReference type="PATRIC" id="fig|1411691.4.peg.2492"/>
<dbReference type="EchoBASE" id="EB2398"/>
<dbReference type="eggNOG" id="COG2846">
    <property type="taxonomic scope" value="Bacteria"/>
</dbReference>
<dbReference type="HOGENOM" id="CLU_076075_2_0_6"/>
<dbReference type="InParanoid" id="P69506"/>
<dbReference type="OMA" id="ACTTWRV"/>
<dbReference type="OrthoDB" id="9797132at2"/>
<dbReference type="PhylomeDB" id="P69506"/>
<dbReference type="BioCyc" id="EcoCyc:G7866-MONOMER"/>
<dbReference type="BioCyc" id="MetaCyc:G7866-MONOMER"/>
<dbReference type="PRO" id="PR:P69506"/>
<dbReference type="Proteomes" id="UP000000625">
    <property type="component" value="Chromosome"/>
</dbReference>
<dbReference type="GO" id="GO:0005829">
    <property type="term" value="C:cytosol"/>
    <property type="evidence" value="ECO:0000314"/>
    <property type="project" value="EcoCyc"/>
</dbReference>
<dbReference type="GO" id="GO:0005506">
    <property type="term" value="F:iron ion binding"/>
    <property type="evidence" value="ECO:0000314"/>
    <property type="project" value="EcoCyc"/>
</dbReference>
<dbReference type="GO" id="GO:0098809">
    <property type="term" value="F:nitrite reductase activity"/>
    <property type="evidence" value="ECO:0000314"/>
    <property type="project" value="EcoCyc"/>
</dbReference>
<dbReference type="GO" id="GO:0030091">
    <property type="term" value="P:protein repair"/>
    <property type="evidence" value="ECO:0000314"/>
    <property type="project" value="EcoCyc"/>
</dbReference>
<dbReference type="GO" id="GO:0051409">
    <property type="term" value="P:response to nitrosative stress"/>
    <property type="evidence" value="ECO:0007669"/>
    <property type="project" value="UniProtKB-UniRule"/>
</dbReference>
<dbReference type="GO" id="GO:0006979">
    <property type="term" value="P:response to oxidative stress"/>
    <property type="evidence" value="ECO:0007669"/>
    <property type="project" value="UniProtKB-UniRule"/>
</dbReference>
<dbReference type="CDD" id="cd12108">
    <property type="entry name" value="Hr-like"/>
    <property type="match status" value="1"/>
</dbReference>
<dbReference type="FunFam" id="1.20.120.520:FF:000001">
    <property type="entry name" value="Iron-sulfur cluster repair protein YtfE"/>
    <property type="match status" value="1"/>
</dbReference>
<dbReference type="Gene3D" id="1.20.120.520">
    <property type="entry name" value="nmb1532 protein domain like"/>
    <property type="match status" value="1"/>
</dbReference>
<dbReference type="HAMAP" id="MF_01606">
    <property type="entry name" value="RIC_YtfE"/>
    <property type="match status" value="1"/>
</dbReference>
<dbReference type="InterPro" id="IPR023742">
    <property type="entry name" value="FeS-repair_YftE"/>
</dbReference>
<dbReference type="InterPro" id="IPR012312">
    <property type="entry name" value="Hemerythrin-like"/>
</dbReference>
<dbReference type="InterPro" id="IPR019903">
    <property type="entry name" value="RIC_family"/>
</dbReference>
<dbReference type="NCBIfam" id="TIGR03652">
    <property type="entry name" value="FeS_repair_RIC"/>
    <property type="match status" value="1"/>
</dbReference>
<dbReference type="NCBIfam" id="NF008221">
    <property type="entry name" value="PRK10992.1"/>
    <property type="match status" value="1"/>
</dbReference>
<dbReference type="PANTHER" id="PTHR36438">
    <property type="entry name" value="IRON-SULFUR CLUSTER REPAIR PROTEIN YTFE"/>
    <property type="match status" value="1"/>
</dbReference>
<dbReference type="PANTHER" id="PTHR36438:SF1">
    <property type="entry name" value="IRON-SULFUR CLUSTER REPAIR PROTEIN YTFE"/>
    <property type="match status" value="1"/>
</dbReference>
<dbReference type="Pfam" id="PF01814">
    <property type="entry name" value="Hemerythrin"/>
    <property type="match status" value="1"/>
</dbReference>
<dbReference type="Pfam" id="PF04405">
    <property type="entry name" value="ScdA_N"/>
    <property type="match status" value="1"/>
</dbReference>
<reference key="1">
    <citation type="journal article" date="1995" name="Nucleic Acids Res.">
        <title>Analysis of the Escherichia coli genome VI: DNA sequence of the region from 92.8 through 100 minutes.</title>
        <authorList>
            <person name="Burland V.D."/>
            <person name="Plunkett G. III"/>
            <person name="Sofia H.J."/>
            <person name="Daniels D.L."/>
            <person name="Blattner F.R."/>
        </authorList>
    </citation>
    <scope>NUCLEOTIDE SEQUENCE [LARGE SCALE GENOMIC DNA]</scope>
    <source>
        <strain>K12 / MG1655 / ATCC 47076</strain>
    </source>
</reference>
<reference key="2">
    <citation type="journal article" date="1997" name="Science">
        <title>The complete genome sequence of Escherichia coli K-12.</title>
        <authorList>
            <person name="Blattner F.R."/>
            <person name="Plunkett G. III"/>
            <person name="Bloch C.A."/>
            <person name="Perna N.T."/>
            <person name="Burland V."/>
            <person name="Riley M."/>
            <person name="Collado-Vides J."/>
            <person name="Glasner J.D."/>
            <person name="Rode C.K."/>
            <person name="Mayhew G.F."/>
            <person name="Gregor J."/>
            <person name="Davis N.W."/>
            <person name="Kirkpatrick H.A."/>
            <person name="Goeden M.A."/>
            <person name="Rose D.J."/>
            <person name="Mau B."/>
            <person name="Shao Y."/>
        </authorList>
    </citation>
    <scope>NUCLEOTIDE SEQUENCE [LARGE SCALE GENOMIC DNA]</scope>
    <source>
        <strain>K12 / MG1655 / ATCC 47076</strain>
    </source>
</reference>
<reference key="3">
    <citation type="journal article" date="2006" name="Mol. Syst. Biol.">
        <title>Highly accurate genome sequences of Escherichia coli K-12 strains MG1655 and W3110.</title>
        <authorList>
            <person name="Hayashi K."/>
            <person name="Morooka N."/>
            <person name="Yamamoto Y."/>
            <person name="Fujita K."/>
            <person name="Isono K."/>
            <person name="Choi S."/>
            <person name="Ohtsubo E."/>
            <person name="Baba T."/>
            <person name="Wanner B.L."/>
            <person name="Mori H."/>
            <person name="Horiuchi T."/>
        </authorList>
    </citation>
    <scope>NUCLEOTIDE SEQUENCE [LARGE SCALE GENOMIC DNA]</scope>
    <source>
        <strain>K12 / W3110 / ATCC 27325 / DSM 5911</strain>
    </source>
</reference>
<reference key="4">
    <citation type="journal article" date="2005" name="J. Biol. Chem.">
        <title>New genes implicated in the protection of anaerobically grown Escherichia coli against nitric oxide.</title>
        <authorList>
            <person name="Justino M.C."/>
            <person name="Vicente J.B."/>
            <person name="Teixeira M."/>
            <person name="Saraiva L.M."/>
        </authorList>
    </citation>
    <scope>INDUCTION</scope>
    <scope>DISRUPTION PHENOTYPE</scope>
    <source>
        <strain>K12 / ATCC 23716 / DSM 498 / CIP 110067 / IMG 1711</strain>
    </source>
</reference>
<reference key="5">
    <citation type="journal article" date="2006" name="FEMS Microbiol. Lett.">
        <title>Escherichia coli YtfE is a di-iron protein with an important function in assembly of iron-sulphur clusters.</title>
        <authorList>
            <person name="Justino M.C."/>
            <person name="Almeida C.C."/>
            <person name="Goncalves V.L."/>
            <person name="Teixeira M."/>
            <person name="Saraiva L.M."/>
        </authorList>
    </citation>
    <scope>FUNCTION</scope>
    <scope>INDUCTION</scope>
    <scope>DISRUPTION PHENOTYPE</scope>
    <scope>IRON-BINDING</scope>
    <source>
        <strain>K12 / ATCC 23716 / DSM 498 / CIP 110067 / IMG 1711</strain>
    </source>
</reference>
<reference key="6">
    <citation type="journal article" date="2007" name="J. Biol. Chem.">
        <title>Escherichia coli di-iron YtfE protein is necessary for the repair of stress-damaged iron-sulfur clusters.</title>
        <authorList>
            <person name="Justino M.C."/>
            <person name="Almeida C.C."/>
            <person name="Teixeira M."/>
            <person name="Saraiva L.M."/>
        </authorList>
    </citation>
    <scope>FUNCTION</scope>
    <scope>DISRUPTION PHENOTYPE</scope>
    <source>
        <strain>K12 / ATCC 23716 / DSM 498 / CIP 110067 / IMG 1711</strain>
    </source>
</reference>
<reference key="7">
    <citation type="journal article" date="2008" name="J. Biol. Inorg. Chem.">
        <title>Iron-sulfur repair YtfE protein from Escherichia coli: structural characterization of the di-iron center.</title>
        <authorList>
            <person name="Todorovic S."/>
            <person name="Justino M.C."/>
            <person name="Wellenreuther G."/>
            <person name="Hildebrandt P."/>
            <person name="Murgida D.H."/>
            <person name="Meyer-Klaucke W."/>
            <person name="Saraiva L.M."/>
        </authorList>
    </citation>
    <scope>FUNCTION</scope>
    <scope>SUBUNIT</scope>
    <scope>IRON-BINDING</scope>
</reference>
<feature type="chain" id="PRO_0000213049" description="Iron-sulfur cluster repair protein YtfE">
    <location>
        <begin position="1"/>
        <end position="220"/>
    </location>
</feature>
<feature type="helix" evidence="6">
    <location>
        <begin position="3"/>
        <end position="5"/>
    </location>
</feature>
<feature type="helix" evidence="6">
    <location>
        <begin position="8"/>
        <end position="14"/>
    </location>
</feature>
<feature type="helix" evidence="6">
    <location>
        <begin position="18"/>
        <end position="24"/>
    </location>
</feature>
<feature type="turn" evidence="6">
    <location>
        <begin position="29"/>
        <end position="31"/>
    </location>
</feature>
<feature type="strand" evidence="7">
    <location>
        <begin position="34"/>
        <end position="36"/>
    </location>
</feature>
<feature type="helix" evidence="6">
    <location>
        <begin position="37"/>
        <end position="43"/>
    </location>
</feature>
<feature type="helix" evidence="6">
    <location>
        <begin position="48"/>
        <end position="60"/>
    </location>
</feature>
<feature type="helix" evidence="6">
    <location>
        <begin position="67"/>
        <end position="69"/>
    </location>
</feature>
<feature type="helix" evidence="6">
    <location>
        <begin position="72"/>
        <end position="82"/>
    </location>
</feature>
<feature type="helix" evidence="6">
    <location>
        <begin position="84"/>
        <end position="104"/>
    </location>
</feature>
<feature type="turn" evidence="6">
    <location>
        <begin position="105"/>
        <end position="107"/>
    </location>
</feature>
<feature type="strand" evidence="8">
    <location>
        <begin position="108"/>
        <end position="110"/>
    </location>
</feature>
<feature type="helix" evidence="6">
    <location>
        <begin position="115"/>
        <end position="135"/>
    </location>
</feature>
<feature type="helix" evidence="6">
    <location>
        <begin position="137"/>
        <end position="142"/>
    </location>
</feature>
<feature type="helix" evidence="6">
    <location>
        <begin position="146"/>
        <end position="148"/>
    </location>
</feature>
<feature type="helix" evidence="6">
    <location>
        <begin position="150"/>
        <end position="173"/>
    </location>
</feature>
<feature type="turn" evidence="6">
    <location>
        <begin position="174"/>
        <end position="177"/>
    </location>
</feature>
<feature type="helix" evidence="6">
    <location>
        <begin position="185"/>
        <end position="210"/>
    </location>
</feature>
<feature type="helix" evidence="6">
    <location>
        <begin position="212"/>
        <end position="217"/>
    </location>
</feature>
<proteinExistence type="evidence at protein level"/>